<name>RS181_MYCVP</name>
<feature type="chain" id="PRO_0000345510" description="Small ribosomal subunit protein bS18A">
    <location>
        <begin position="1"/>
        <end position="83"/>
    </location>
</feature>
<organism>
    <name type="scientific">Mycolicibacterium vanbaalenii (strain DSM 7251 / JCM 13017 / BCRC 16820 / KCTC 9966 / NRRL B-24157 / PYR-1)</name>
    <name type="common">Mycobacterium vanbaalenii</name>
    <dbReference type="NCBI Taxonomy" id="350058"/>
    <lineage>
        <taxon>Bacteria</taxon>
        <taxon>Bacillati</taxon>
        <taxon>Actinomycetota</taxon>
        <taxon>Actinomycetes</taxon>
        <taxon>Mycobacteriales</taxon>
        <taxon>Mycobacteriaceae</taxon>
        <taxon>Mycolicibacterium</taxon>
    </lineage>
</organism>
<evidence type="ECO:0000255" key="1">
    <source>
        <dbReference type="HAMAP-Rule" id="MF_00270"/>
    </source>
</evidence>
<evidence type="ECO:0000305" key="2"/>
<keyword id="KW-0687">Ribonucleoprotein</keyword>
<keyword id="KW-0689">Ribosomal protein</keyword>
<keyword id="KW-0694">RNA-binding</keyword>
<keyword id="KW-0699">rRNA-binding</keyword>
<reference key="1">
    <citation type="submission" date="2006-12" db="EMBL/GenBank/DDBJ databases">
        <title>Complete sequence of Mycobacterium vanbaalenii PYR-1.</title>
        <authorList>
            <consortium name="US DOE Joint Genome Institute"/>
            <person name="Copeland A."/>
            <person name="Lucas S."/>
            <person name="Lapidus A."/>
            <person name="Barry K."/>
            <person name="Detter J.C."/>
            <person name="Glavina del Rio T."/>
            <person name="Hammon N."/>
            <person name="Israni S."/>
            <person name="Dalin E."/>
            <person name="Tice H."/>
            <person name="Pitluck S."/>
            <person name="Singan V."/>
            <person name="Schmutz J."/>
            <person name="Larimer F."/>
            <person name="Land M."/>
            <person name="Hauser L."/>
            <person name="Kyrpides N."/>
            <person name="Anderson I.J."/>
            <person name="Miller C."/>
            <person name="Richardson P."/>
        </authorList>
    </citation>
    <scope>NUCLEOTIDE SEQUENCE [LARGE SCALE GENOMIC DNA]</scope>
    <source>
        <strain>DSM 7251 / JCM 13017 / BCRC 16820 / KCTC 9966 / NRRL B-24157 / PYR-1</strain>
    </source>
</reference>
<protein>
    <recommendedName>
        <fullName evidence="1">Small ribosomal subunit protein bS18A</fullName>
    </recommendedName>
    <alternativeName>
        <fullName evidence="2">30S ribosomal protein S18 1</fullName>
    </alternativeName>
</protein>
<comment type="function">
    <text evidence="1">Binds as a heterodimer with protein bS6 to the central domain of the 16S rRNA, where it helps stabilize the platform of the 30S subunit.</text>
</comment>
<comment type="subunit">
    <text evidence="1">Part of the 30S ribosomal subunit. Forms a tight heterodimer with protein bS6.</text>
</comment>
<comment type="similarity">
    <text evidence="1">Belongs to the bacterial ribosomal protein bS18 family.</text>
</comment>
<proteinExistence type="inferred from homology"/>
<dbReference type="EMBL" id="CP000511">
    <property type="protein sequence ID" value="ABM16261.1"/>
    <property type="molecule type" value="Genomic_DNA"/>
</dbReference>
<dbReference type="SMR" id="A1TGG1"/>
<dbReference type="STRING" id="350058.Mvan_5492"/>
<dbReference type="KEGG" id="mva:Mvan_5492"/>
<dbReference type="eggNOG" id="COG0238">
    <property type="taxonomic scope" value="Bacteria"/>
</dbReference>
<dbReference type="HOGENOM" id="CLU_148710_1_0_11"/>
<dbReference type="Proteomes" id="UP000009159">
    <property type="component" value="Chromosome"/>
</dbReference>
<dbReference type="GO" id="GO:0022627">
    <property type="term" value="C:cytosolic small ribosomal subunit"/>
    <property type="evidence" value="ECO:0007669"/>
    <property type="project" value="TreeGrafter"/>
</dbReference>
<dbReference type="GO" id="GO:0070181">
    <property type="term" value="F:small ribosomal subunit rRNA binding"/>
    <property type="evidence" value="ECO:0007669"/>
    <property type="project" value="TreeGrafter"/>
</dbReference>
<dbReference type="GO" id="GO:0003735">
    <property type="term" value="F:structural constituent of ribosome"/>
    <property type="evidence" value="ECO:0007669"/>
    <property type="project" value="InterPro"/>
</dbReference>
<dbReference type="GO" id="GO:0006412">
    <property type="term" value="P:translation"/>
    <property type="evidence" value="ECO:0007669"/>
    <property type="project" value="UniProtKB-UniRule"/>
</dbReference>
<dbReference type="FunFam" id="4.10.640.10:FF:000016">
    <property type="entry name" value="30S ribosomal protein S18"/>
    <property type="match status" value="1"/>
</dbReference>
<dbReference type="Gene3D" id="4.10.640.10">
    <property type="entry name" value="Ribosomal protein S18"/>
    <property type="match status" value="1"/>
</dbReference>
<dbReference type="HAMAP" id="MF_00270">
    <property type="entry name" value="Ribosomal_bS18"/>
    <property type="match status" value="1"/>
</dbReference>
<dbReference type="InterPro" id="IPR001648">
    <property type="entry name" value="Ribosomal_bS18"/>
</dbReference>
<dbReference type="InterPro" id="IPR036870">
    <property type="entry name" value="Ribosomal_bS18_sf"/>
</dbReference>
<dbReference type="NCBIfam" id="TIGR00165">
    <property type="entry name" value="S18"/>
    <property type="match status" value="1"/>
</dbReference>
<dbReference type="PANTHER" id="PTHR13479">
    <property type="entry name" value="30S RIBOSOMAL PROTEIN S18"/>
    <property type="match status" value="1"/>
</dbReference>
<dbReference type="PANTHER" id="PTHR13479:SF40">
    <property type="entry name" value="SMALL RIBOSOMAL SUBUNIT PROTEIN BS18M"/>
    <property type="match status" value="1"/>
</dbReference>
<dbReference type="Pfam" id="PF01084">
    <property type="entry name" value="Ribosomal_S18"/>
    <property type="match status" value="1"/>
</dbReference>
<dbReference type="PRINTS" id="PR00974">
    <property type="entry name" value="RIBOSOMALS18"/>
</dbReference>
<dbReference type="SUPFAM" id="SSF46911">
    <property type="entry name" value="Ribosomal protein S18"/>
    <property type="match status" value="1"/>
</dbReference>
<accession>A1TGG1</accession>
<sequence>MTARRREAAPAKKRRNLLKSLGIERVDYKDTSTLRQFISERGKIRSRSVTGLTVQQQRQVTTAVKTAREMALLPYPGQNPTGR</sequence>
<gene>
    <name evidence="1" type="primary">rpsR1</name>
    <name type="ordered locus">Mvan_5492</name>
</gene>